<reference key="1">
    <citation type="journal article" date="1987" name="Science">
        <title>A novel putative tyrosine kinase receptor encoded by the eph gene.</title>
        <authorList>
            <person name="Hirai H."/>
            <person name="Maru Y."/>
            <person name="Hagiwara K."/>
            <person name="Nishida J."/>
            <person name="Takaku F."/>
        </authorList>
    </citation>
    <scope>NUCLEOTIDE SEQUENCE [MRNA] (ISOFORM 1)</scope>
    <scope>VARIANTS ALA-160 AND VAL-900</scope>
</reference>
<reference key="2">
    <citation type="journal article" date="1999" name="Mol. Cell. Probes">
        <title>Genomic structure of the EPHA1 receptor tyrosine kinase gene.</title>
        <authorList>
            <person name="Owshalimpur D."/>
            <person name="Kelley M.J."/>
        </authorList>
    </citation>
    <scope>NUCLEOTIDE SEQUENCE [GENOMIC DNA]</scope>
    <scope>VARIANTS ALA-160 AND VAL-900</scope>
</reference>
<reference key="3">
    <citation type="journal article" date="2008" name="Arthritis Res. Ther.">
        <title>Novel splice variants derived from the receptor tyrosine kinase superfamily are potential therapeutics for rheumatoid arthritis.</title>
        <authorList>
            <person name="Jin P."/>
            <person name="Zhang J."/>
            <person name="Sumariwalla P.F."/>
            <person name="Ni I."/>
            <person name="Jorgensen B."/>
            <person name="Crawford D."/>
            <person name="Phillips S."/>
            <person name="Feldmann M."/>
            <person name="Shepard H.M."/>
            <person name="Paleolog E.M."/>
        </authorList>
    </citation>
    <scope>NUCLEOTIDE SEQUENCE [MRNA] (ISOFORMS 2 AND 3)</scope>
    <scope>ALTERNATIVE SPLICING</scope>
</reference>
<reference key="4">
    <citation type="journal article" date="2003" name="Nature">
        <title>The DNA sequence of human chromosome 7.</title>
        <authorList>
            <person name="Hillier L.W."/>
            <person name="Fulton R.S."/>
            <person name="Fulton L.A."/>
            <person name="Graves T.A."/>
            <person name="Pepin K.H."/>
            <person name="Wagner-McPherson C."/>
            <person name="Layman D."/>
            <person name="Maas J."/>
            <person name="Jaeger S."/>
            <person name="Walker R."/>
            <person name="Wylie K."/>
            <person name="Sekhon M."/>
            <person name="Becker M.C."/>
            <person name="O'Laughlin M.D."/>
            <person name="Schaller M.E."/>
            <person name="Fewell G.A."/>
            <person name="Delehaunty K.D."/>
            <person name="Miner T.L."/>
            <person name="Nash W.E."/>
            <person name="Cordes M."/>
            <person name="Du H."/>
            <person name="Sun H."/>
            <person name="Edwards J."/>
            <person name="Bradshaw-Cordum H."/>
            <person name="Ali J."/>
            <person name="Andrews S."/>
            <person name="Isak A."/>
            <person name="Vanbrunt A."/>
            <person name="Nguyen C."/>
            <person name="Du F."/>
            <person name="Lamar B."/>
            <person name="Courtney L."/>
            <person name="Kalicki J."/>
            <person name="Ozersky P."/>
            <person name="Bielicki L."/>
            <person name="Scott K."/>
            <person name="Holmes A."/>
            <person name="Harkins R."/>
            <person name="Harris A."/>
            <person name="Strong C.M."/>
            <person name="Hou S."/>
            <person name="Tomlinson C."/>
            <person name="Dauphin-Kohlberg S."/>
            <person name="Kozlowicz-Reilly A."/>
            <person name="Leonard S."/>
            <person name="Rohlfing T."/>
            <person name="Rock S.M."/>
            <person name="Tin-Wollam A.-M."/>
            <person name="Abbott A."/>
            <person name="Minx P."/>
            <person name="Maupin R."/>
            <person name="Strowmatt C."/>
            <person name="Latreille P."/>
            <person name="Miller N."/>
            <person name="Johnson D."/>
            <person name="Murray J."/>
            <person name="Woessner J.P."/>
            <person name="Wendl M.C."/>
            <person name="Yang S.-P."/>
            <person name="Schultz B.R."/>
            <person name="Wallis J.W."/>
            <person name="Spieth J."/>
            <person name="Bieri T.A."/>
            <person name="Nelson J.O."/>
            <person name="Berkowicz N."/>
            <person name="Wohldmann P.E."/>
            <person name="Cook L.L."/>
            <person name="Hickenbotham M.T."/>
            <person name="Eldred J."/>
            <person name="Williams D."/>
            <person name="Bedell J.A."/>
            <person name="Mardis E.R."/>
            <person name="Clifton S.W."/>
            <person name="Chissoe S.L."/>
            <person name="Marra M.A."/>
            <person name="Raymond C."/>
            <person name="Haugen E."/>
            <person name="Gillett W."/>
            <person name="Zhou Y."/>
            <person name="James R."/>
            <person name="Phelps K."/>
            <person name="Iadanoto S."/>
            <person name="Bubb K."/>
            <person name="Simms E."/>
            <person name="Levy R."/>
            <person name="Clendenning J."/>
            <person name="Kaul R."/>
            <person name="Kent W.J."/>
            <person name="Furey T.S."/>
            <person name="Baertsch R.A."/>
            <person name="Brent M.R."/>
            <person name="Keibler E."/>
            <person name="Flicek P."/>
            <person name="Bork P."/>
            <person name="Suyama M."/>
            <person name="Bailey J.A."/>
            <person name="Portnoy M.E."/>
            <person name="Torrents D."/>
            <person name="Chinwalla A.T."/>
            <person name="Gish W.R."/>
            <person name="Eddy S.R."/>
            <person name="McPherson J.D."/>
            <person name="Olson M.V."/>
            <person name="Eichler E.E."/>
            <person name="Green E.D."/>
            <person name="Waterston R.H."/>
            <person name="Wilson R.K."/>
        </authorList>
    </citation>
    <scope>NUCLEOTIDE SEQUENCE [LARGE SCALE GENOMIC DNA]</scope>
</reference>
<reference key="5">
    <citation type="journal article" date="2003" name="Science">
        <title>Human chromosome 7: DNA sequence and biology.</title>
        <authorList>
            <person name="Scherer S.W."/>
            <person name="Cheung J."/>
            <person name="MacDonald J.R."/>
            <person name="Osborne L.R."/>
            <person name="Nakabayashi K."/>
            <person name="Herbrick J.-A."/>
            <person name="Carson A.R."/>
            <person name="Parker-Katiraee L."/>
            <person name="Skaug J."/>
            <person name="Khaja R."/>
            <person name="Zhang J."/>
            <person name="Hudek A.K."/>
            <person name="Li M."/>
            <person name="Haddad M."/>
            <person name="Duggan G.E."/>
            <person name="Fernandez B.A."/>
            <person name="Kanematsu E."/>
            <person name="Gentles S."/>
            <person name="Christopoulos C.C."/>
            <person name="Choufani S."/>
            <person name="Kwasnicka D."/>
            <person name="Zheng X.H."/>
            <person name="Lai Z."/>
            <person name="Nusskern D.R."/>
            <person name="Zhang Q."/>
            <person name="Gu Z."/>
            <person name="Lu F."/>
            <person name="Zeesman S."/>
            <person name="Nowaczyk M.J."/>
            <person name="Teshima I."/>
            <person name="Chitayat D."/>
            <person name="Shuman C."/>
            <person name="Weksberg R."/>
            <person name="Zackai E.H."/>
            <person name="Grebe T.A."/>
            <person name="Cox S.R."/>
            <person name="Kirkpatrick S.J."/>
            <person name="Rahman N."/>
            <person name="Friedman J.M."/>
            <person name="Heng H.H.Q."/>
            <person name="Pelicci P.G."/>
            <person name="Lo-Coco F."/>
            <person name="Belloni E."/>
            <person name="Shaffer L.G."/>
            <person name="Pober B."/>
            <person name="Morton C.C."/>
            <person name="Gusella J.F."/>
            <person name="Bruns G.A.P."/>
            <person name="Korf B.R."/>
            <person name="Quade B.J."/>
            <person name="Ligon A.H."/>
            <person name="Ferguson H."/>
            <person name="Higgins A.W."/>
            <person name="Leach N.T."/>
            <person name="Herrick S.R."/>
            <person name="Lemyre E."/>
            <person name="Farra C.G."/>
            <person name="Kim H.-G."/>
            <person name="Summers A.M."/>
            <person name="Gripp K.W."/>
            <person name="Roberts W."/>
            <person name="Szatmari P."/>
            <person name="Winsor E.J.T."/>
            <person name="Grzeschik K.-H."/>
            <person name="Teebi A."/>
            <person name="Minassian B.A."/>
            <person name="Kere J."/>
            <person name="Armengol L."/>
            <person name="Pujana M.A."/>
            <person name="Estivill X."/>
            <person name="Wilson M.D."/>
            <person name="Koop B.F."/>
            <person name="Tosi S."/>
            <person name="Moore G.E."/>
            <person name="Boright A.P."/>
            <person name="Zlotorynski E."/>
            <person name="Kerem B."/>
            <person name="Kroisel P.M."/>
            <person name="Petek E."/>
            <person name="Oscier D.G."/>
            <person name="Mould S.J."/>
            <person name="Doehner H."/>
            <person name="Doehner K."/>
            <person name="Rommens J.M."/>
            <person name="Vincent J.B."/>
            <person name="Venter J.C."/>
            <person name="Li P.W."/>
            <person name="Mural R.J."/>
            <person name="Adams M.D."/>
            <person name="Tsui L.-C."/>
        </authorList>
    </citation>
    <scope>NUCLEOTIDE SEQUENCE [LARGE SCALE GENOMIC DNA]</scope>
    <scope>VARIANTS ALA-160 AND VAL-900</scope>
</reference>
<reference key="6">
    <citation type="submission" date="2005-09" db="EMBL/GenBank/DDBJ databases">
        <authorList>
            <person name="Mural R.J."/>
            <person name="Istrail S."/>
            <person name="Sutton G.G."/>
            <person name="Florea L."/>
            <person name="Halpern A.L."/>
            <person name="Mobarry C.M."/>
            <person name="Lippert R."/>
            <person name="Walenz B."/>
            <person name="Shatkay H."/>
            <person name="Dew I."/>
            <person name="Miller J.R."/>
            <person name="Flanigan M.J."/>
            <person name="Edwards N.J."/>
            <person name="Bolanos R."/>
            <person name="Fasulo D."/>
            <person name="Halldorsson B.V."/>
            <person name="Hannenhalli S."/>
            <person name="Turner R."/>
            <person name="Yooseph S."/>
            <person name="Lu F."/>
            <person name="Nusskern D.R."/>
            <person name="Shue B.C."/>
            <person name="Zheng X.H."/>
            <person name="Zhong F."/>
            <person name="Delcher A.L."/>
            <person name="Huson D.H."/>
            <person name="Kravitz S.A."/>
            <person name="Mouchard L."/>
            <person name="Reinert K."/>
            <person name="Remington K.A."/>
            <person name="Clark A.G."/>
            <person name="Waterman M.S."/>
            <person name="Eichler E.E."/>
            <person name="Adams M.D."/>
            <person name="Hunkapiller M.W."/>
            <person name="Myers E.W."/>
            <person name="Venter J.C."/>
        </authorList>
    </citation>
    <scope>NUCLEOTIDE SEQUENCE [LARGE SCALE GENOMIC DNA]</scope>
    <scope>VARIANTS ALA-160 AND VAL-900</scope>
</reference>
<reference key="7">
    <citation type="journal article" date="2004" name="Genome Res.">
        <title>The status, quality, and expansion of the NIH full-length cDNA project: the Mammalian Gene Collection (MGC).</title>
        <authorList>
            <consortium name="The MGC Project Team"/>
        </authorList>
    </citation>
    <scope>NUCLEOTIDE SEQUENCE [LARGE SCALE MRNA] (ISOFORM 1)</scope>
    <scope>VARIANTS ALA-160 AND VAL-900</scope>
    <source>
        <tissue>Brain</tissue>
    </source>
</reference>
<reference key="8">
    <citation type="submission" date="1994-05" db="EMBL/GenBank/DDBJ databases">
        <title>An EGFR/eph chimeric receptor possesses ligand stimulated tyrosine kinase activity and promotes cell growth.</title>
        <authorList>
            <person name="Tuzi N.L."/>
        </authorList>
    </citation>
    <scope>NUCLEOTIDE SEQUENCE [MRNA] OF 286-976 (ISOFORM 1)</scope>
    <scope>VARIANT VAL-900</scope>
    <source>
        <tissue>Placenta</tissue>
    </source>
</reference>
<reference key="9">
    <citation type="journal article" date="1997" name="Cell">
        <title>Unified nomenclature for Eph family receptors and their ligands, the ephrins.</title>
        <authorList>
            <consortium name="Eph nomenclature committee"/>
        </authorList>
    </citation>
    <scope>NOMENCLATURE</scope>
</reference>
<reference key="10">
    <citation type="journal article" date="2007" name="Eur. J. Immunol.">
        <title>Ephrin-A1 stimulates migration of CD8+CCR7+ T lymphocytes.</title>
        <authorList>
            <person name="Hjorthaug H.S."/>
            <person name="Aasheim H.C."/>
        </authorList>
    </citation>
    <scope>FUNCTION IN MIGRATION OF T-LYMPHOCYTES</scope>
    <scope>INTERACTION WITH LCK; PTK2B/PYK2 AND PI3-KINASE</scope>
</reference>
<reference key="11">
    <citation type="journal article" date="2009" name="J. Cell Sci.">
        <title>EphA1 interacts with integrin-linked kinase and regulates cell morphology and motility.</title>
        <authorList>
            <person name="Yamazaki T."/>
            <person name="Masuda J."/>
            <person name="Omori T."/>
            <person name="Usui R."/>
            <person name="Akiyama H."/>
            <person name="Maru Y."/>
        </authorList>
    </citation>
    <scope>FUNCTION IN CELL SPREADING</scope>
    <scope>FUNCTION IN CELL MIGRATION</scope>
    <scope>AUTOPHOSPHORYLATION</scope>
    <scope>SUBCELLULAR LOCATION</scope>
    <scope>INTERACTION WITH PTK2/FAK1 AND ILK</scope>
</reference>
<reference key="12">
    <citation type="journal article" date="2010" name="Oncol. Rep.">
        <title>EphA1 receptor silencing by small interfering RNA has antiangiogenic and antitumor efficacy in hepatocellular carcinoma.</title>
        <authorList>
            <person name="Chen G."/>
            <person name="Wang Y."/>
            <person name="Zhou M."/>
            <person name="Shi H."/>
            <person name="Yu Z."/>
            <person name="Zhu Y."/>
            <person name="Yu F."/>
        </authorList>
    </citation>
    <scope>FUNCTION IN ANGIOGENESIS</scope>
    <scope>FUNCTION IN CELL PROLIFERATION</scope>
</reference>
<reference key="13">
    <citation type="journal article" date="2010" name="PLoS ONE">
        <title>Development and validation of a method for profiling post-translational modification activities using protein microarrays.</title>
        <authorList>
            <person name="Del Rincon S.V."/>
            <person name="Rogers J."/>
            <person name="Widschwendter M."/>
            <person name="Sun D."/>
            <person name="Sieburg H.B."/>
            <person name="Spruck C."/>
        </authorList>
    </citation>
    <scope>UBIQUITINATION</scope>
</reference>
<reference key="14">
    <citation type="journal article" date="2011" name="Sci. Signal.">
        <title>System-wide temporal characterization of the proteome and phosphoproteome of human embryonic stem cell differentiation.</title>
        <authorList>
            <person name="Rigbolt K.T."/>
            <person name="Prokhorova T.A."/>
            <person name="Akimov V."/>
            <person name="Henningsen J."/>
            <person name="Johansen P.T."/>
            <person name="Kratchmarova I."/>
            <person name="Kassem M."/>
            <person name="Mann M."/>
            <person name="Olsen J.V."/>
            <person name="Blagoev B."/>
        </authorList>
    </citation>
    <scope>PHOSPHORYLATION [LARGE SCALE ANALYSIS] AT SER-906 AND SER-910</scope>
    <scope>IDENTIFICATION BY MASS SPECTROMETRY [LARGE SCALE ANALYSIS]</scope>
</reference>
<reference key="15">
    <citation type="journal article" date="2008" name="J. Biol. Chem.">
        <title>Spatial structure and pH-dependent conformational diversity of dimeric transmembrane domain of the receptor tyrosine kinase EphA1.</title>
        <authorList>
            <person name="Bocharov E.V."/>
            <person name="Mayzel M.L."/>
            <person name="Volynsky P.E."/>
            <person name="Goncharuk M.V."/>
            <person name="Ermolyuk Y.S."/>
            <person name="Schulga A.A."/>
            <person name="Artemenko E.O."/>
            <person name="Efremov R.G."/>
            <person name="Arseniev A.S."/>
        </authorList>
    </citation>
    <scope>STRUCTURE BY NMR OF 536-573</scope>
    <scope>HOMODIMERIZATION</scope>
</reference>
<reference key="16">
    <citation type="submission" date="2009-06" db="PDB data bank">
        <title>Sam domain of human ephrin type-a receptor 1 (epha1).</title>
        <authorList>
            <consortium name="Structural genomics consortium (SGC)"/>
        </authorList>
    </citation>
    <scope>X-RAY CRYSTALLOGRAPHY (2.0 ANGSTROMS) OF 911-974</scope>
</reference>
<reference key="17">
    <citation type="journal article" date="2007" name="Nature">
        <title>Patterns of somatic mutation in human cancer genomes.</title>
        <authorList>
            <person name="Greenman C."/>
            <person name="Stephens P."/>
            <person name="Smith R."/>
            <person name="Dalgliesh G.L."/>
            <person name="Hunter C."/>
            <person name="Bignell G."/>
            <person name="Davies H."/>
            <person name="Teague J."/>
            <person name="Butler A."/>
            <person name="Stevens C."/>
            <person name="Edkins S."/>
            <person name="O'Meara S."/>
            <person name="Vastrik I."/>
            <person name="Schmidt E.E."/>
            <person name="Avis T."/>
            <person name="Barthorpe S."/>
            <person name="Bhamra G."/>
            <person name="Buck G."/>
            <person name="Choudhury B."/>
            <person name="Clements J."/>
            <person name="Cole J."/>
            <person name="Dicks E."/>
            <person name="Forbes S."/>
            <person name="Gray K."/>
            <person name="Halliday K."/>
            <person name="Harrison R."/>
            <person name="Hills K."/>
            <person name="Hinton J."/>
            <person name="Jenkinson A."/>
            <person name="Jones D."/>
            <person name="Menzies A."/>
            <person name="Mironenko T."/>
            <person name="Perry J."/>
            <person name="Raine K."/>
            <person name="Richardson D."/>
            <person name="Shepherd R."/>
            <person name="Small A."/>
            <person name="Tofts C."/>
            <person name="Varian J."/>
            <person name="Webb T."/>
            <person name="West S."/>
            <person name="Widaa S."/>
            <person name="Yates A."/>
            <person name="Cahill D.P."/>
            <person name="Louis D.N."/>
            <person name="Goldstraw P."/>
            <person name="Nicholson A.G."/>
            <person name="Brasseur F."/>
            <person name="Looijenga L."/>
            <person name="Weber B.L."/>
            <person name="Chiew Y.-E."/>
            <person name="DeFazio A."/>
            <person name="Greaves M.F."/>
            <person name="Green A.R."/>
            <person name="Campbell P."/>
            <person name="Birney E."/>
            <person name="Easton D.F."/>
            <person name="Chenevix-Trench G."/>
            <person name="Tan M.-H."/>
            <person name="Khoo S.K."/>
            <person name="Teh B.T."/>
            <person name="Yuen S.T."/>
            <person name="Leung S.Y."/>
            <person name="Wooster R."/>
            <person name="Futreal P.A."/>
            <person name="Stratton M.R."/>
        </authorList>
    </citation>
    <scope>VARIANTS [LARGE SCALE ANALYSIS] ALA-160; CYS-351; GLN-492; GLN-575; THR-585; LEU-697; LYS-703; ARG-807 AND VAL-900</scope>
</reference>
<reference key="18">
    <citation type="journal article" date="2009" name="Mol. Cell. Proteomics">
        <title>Large-scale proteomics analysis of the human kinome.</title>
        <authorList>
            <person name="Oppermann F.S."/>
            <person name="Gnad F."/>
            <person name="Olsen J.V."/>
            <person name="Hornberger R."/>
            <person name="Greff Z."/>
            <person name="Keri G."/>
            <person name="Mann M."/>
            <person name="Daub H."/>
        </authorList>
    </citation>
    <scope>VARIANT [LARGE SCALE ANALYSIS] VAL-900</scope>
    <scope>IDENTIFICATION BY MASS SPECTROMETRY [LARGE SCALE ANALYSIS]</scope>
</reference>
<protein>
    <recommendedName>
        <fullName>Ephrin type-A receptor 1</fullName>
        <shortName>hEpha1</shortName>
        <ecNumber>2.7.10.1</ecNumber>
    </recommendedName>
    <alternativeName>
        <fullName>EPH tyrosine kinase</fullName>
    </alternativeName>
    <alternativeName>
        <fullName>EPH tyrosine kinase 1</fullName>
    </alternativeName>
    <alternativeName>
        <fullName>Erythropoietin-producing hepatoma receptor</fullName>
    </alternativeName>
    <alternativeName>
        <fullName>Tyrosine-protein kinase receptor EPH</fullName>
    </alternativeName>
</protein>
<evidence type="ECO:0000255" key="1"/>
<evidence type="ECO:0000255" key="2">
    <source>
        <dbReference type="PROSITE-ProRule" id="PRU00159"/>
    </source>
</evidence>
<evidence type="ECO:0000255" key="3">
    <source>
        <dbReference type="PROSITE-ProRule" id="PRU00184"/>
    </source>
</evidence>
<evidence type="ECO:0000255" key="4">
    <source>
        <dbReference type="PROSITE-ProRule" id="PRU00316"/>
    </source>
</evidence>
<evidence type="ECO:0000255" key="5">
    <source>
        <dbReference type="PROSITE-ProRule" id="PRU00883"/>
    </source>
</evidence>
<evidence type="ECO:0000255" key="6">
    <source>
        <dbReference type="PROSITE-ProRule" id="PRU10028"/>
    </source>
</evidence>
<evidence type="ECO:0000269" key="7">
    <source>
    </source>
</evidence>
<evidence type="ECO:0000269" key="8">
    <source>
    </source>
</evidence>
<evidence type="ECO:0000269" key="9">
    <source>
    </source>
</evidence>
<evidence type="ECO:0000269" key="10">
    <source>
    </source>
</evidence>
<evidence type="ECO:0000269" key="11">
    <source>
    </source>
</evidence>
<evidence type="ECO:0000269" key="12">
    <source>
    </source>
</evidence>
<evidence type="ECO:0000269" key="13">
    <source>
    </source>
</evidence>
<evidence type="ECO:0000269" key="14">
    <source>
    </source>
</evidence>
<evidence type="ECO:0000269" key="15">
    <source>
    </source>
</evidence>
<evidence type="ECO:0000269" key="16">
    <source ref="6"/>
</evidence>
<evidence type="ECO:0000269" key="17">
    <source ref="8"/>
</evidence>
<evidence type="ECO:0000303" key="18">
    <source>
    </source>
</evidence>
<evidence type="ECO:0000305" key="19"/>
<evidence type="ECO:0007744" key="20">
    <source>
    </source>
</evidence>
<evidence type="ECO:0007744" key="21">
    <source>
    </source>
</evidence>
<evidence type="ECO:0007829" key="22">
    <source>
        <dbReference type="PDB" id="2K1K"/>
    </source>
</evidence>
<evidence type="ECO:0007829" key="23">
    <source>
        <dbReference type="PDB" id="3HIL"/>
    </source>
</evidence>
<gene>
    <name type="primary">EPHA1</name>
    <name type="synonym">EPH</name>
    <name type="synonym">EPHT</name>
    <name type="synonym">EPHT1</name>
</gene>
<keyword id="KW-0002">3D-structure</keyword>
<keyword id="KW-0025">Alternative splicing</keyword>
<keyword id="KW-0037">Angiogenesis</keyword>
<keyword id="KW-0067">ATP-binding</keyword>
<keyword id="KW-0130">Cell adhesion</keyword>
<keyword id="KW-1003">Cell membrane</keyword>
<keyword id="KW-0325">Glycoprotein</keyword>
<keyword id="KW-0418">Kinase</keyword>
<keyword id="KW-0472">Membrane</keyword>
<keyword id="KW-0547">Nucleotide-binding</keyword>
<keyword id="KW-0597">Phosphoprotein</keyword>
<keyword id="KW-1267">Proteomics identification</keyword>
<keyword id="KW-0675">Receptor</keyword>
<keyword id="KW-1185">Reference proteome</keyword>
<keyword id="KW-0677">Repeat</keyword>
<keyword id="KW-0732">Signal</keyword>
<keyword id="KW-0808">Transferase</keyword>
<keyword id="KW-0812">Transmembrane</keyword>
<keyword id="KW-1133">Transmembrane helix</keyword>
<keyword id="KW-0829">Tyrosine-protein kinase</keyword>
<keyword id="KW-0832">Ubl conjugation</keyword>
<name>EPHA1_HUMAN</name>
<feature type="signal peptide" evidence="1">
    <location>
        <begin position="1"/>
        <end position="25"/>
    </location>
</feature>
<feature type="chain" id="PRO_0000016798" description="Ephrin type-A receptor 1">
    <location>
        <begin position="26"/>
        <end position="976"/>
    </location>
</feature>
<feature type="topological domain" description="Extracellular" evidence="1">
    <location>
        <begin position="26"/>
        <end position="547"/>
    </location>
</feature>
<feature type="transmembrane region" description="Helical" evidence="1">
    <location>
        <begin position="548"/>
        <end position="568"/>
    </location>
</feature>
<feature type="topological domain" description="Cytoplasmic" evidence="1">
    <location>
        <begin position="569"/>
        <end position="976"/>
    </location>
</feature>
<feature type="domain" description="Eph LBD" evidence="5">
    <location>
        <begin position="27"/>
        <end position="209"/>
    </location>
</feature>
<feature type="domain" description="Fibronectin type-III 1" evidence="4">
    <location>
        <begin position="332"/>
        <end position="445"/>
    </location>
</feature>
<feature type="domain" description="Fibronectin type-III 2" evidence="4">
    <location>
        <begin position="447"/>
        <end position="538"/>
    </location>
</feature>
<feature type="domain" description="Protein kinase" evidence="2">
    <location>
        <begin position="624"/>
        <end position="884"/>
    </location>
</feature>
<feature type="domain" description="SAM" evidence="3">
    <location>
        <begin position="913"/>
        <end position="976"/>
    </location>
</feature>
<feature type="short sequence motif" description="PDZ-binding" evidence="1">
    <location>
        <begin position="974"/>
        <end position="976"/>
    </location>
</feature>
<feature type="active site" description="Proton acceptor" evidence="2 6">
    <location>
        <position position="749"/>
    </location>
</feature>
<feature type="binding site" evidence="2">
    <location>
        <begin position="630"/>
        <end position="638"/>
    </location>
    <ligand>
        <name>ATP</name>
        <dbReference type="ChEBI" id="CHEBI:30616"/>
    </ligand>
</feature>
<feature type="binding site" evidence="2">
    <location>
        <position position="656"/>
    </location>
    <ligand>
        <name>ATP</name>
        <dbReference type="ChEBI" id="CHEBI:30616"/>
    </ligand>
</feature>
<feature type="modified residue" description="Phosphotyrosine; by autocatalysis" evidence="1">
    <location>
        <position position="599"/>
    </location>
</feature>
<feature type="modified residue" description="Phosphotyrosine; by autocatalysis" evidence="1">
    <location>
        <position position="605"/>
    </location>
</feature>
<feature type="modified residue" description="Phosphotyrosine; by autocatalysis" evidence="1">
    <location>
        <position position="781"/>
    </location>
</feature>
<feature type="modified residue" description="Phosphoserine" evidence="21">
    <location>
        <position position="906"/>
    </location>
</feature>
<feature type="modified residue" description="Phosphoserine" evidence="21">
    <location>
        <position position="910"/>
    </location>
</feature>
<feature type="modified residue" description="Phosphotyrosine; by autocatalysis" evidence="1">
    <location>
        <position position="930"/>
    </location>
</feature>
<feature type="glycosylation site" description="N-linked (GlcNAc...) asparagine" evidence="1">
    <location>
        <position position="414"/>
    </location>
</feature>
<feature type="splice variant" id="VSP_056010" description="In isoform 2." evidence="18">
    <original>ESLSGLSLRLVKKEPRQLELTWAGSRPRSPGANLTYELHVLNQDE</original>
    <variation>DPTLSLWTPRVTVRPVSETGEERTEATRADLGGVPAPKPWGEPDL</variation>
    <location>
        <begin position="446"/>
        <end position="490"/>
    </location>
</feature>
<feature type="splice variant" id="VSP_056011" description="In isoform 3." evidence="18">
    <original>ESLSGLSLRLVKKEPRQLELTWAGSRPRS</original>
    <variation>GERLRGAGTGTWWRQKGLRPQNKLMGRKP</variation>
    <location>
        <begin position="446"/>
        <end position="474"/>
    </location>
</feature>
<feature type="splice variant" id="VSP_056012" description="In isoform 3." evidence="18">
    <location>
        <begin position="475"/>
        <end position="976"/>
    </location>
</feature>
<feature type="splice variant" id="VSP_056013" description="In isoform 2." evidence="18">
    <location>
        <begin position="491"/>
        <end position="976"/>
    </location>
</feature>
<feature type="sequence variant" id="VAR_028265" description="In dbSNP:rs4725617." evidence="7 8 9 10 15 16">
    <original>V</original>
    <variation>A</variation>
    <location>
        <position position="160"/>
    </location>
</feature>
<feature type="sequence variant" id="VAR_042115" description="In dbSNP:rs56006153." evidence="10">
    <original>R</original>
    <variation>C</variation>
    <location>
        <position position="351"/>
    </location>
</feature>
<feature type="sequence variant" id="VAR_028266" description="In dbSNP:rs11768549." evidence="10">
    <original>R</original>
    <variation>Q</variation>
    <location>
        <position position="492"/>
    </location>
</feature>
<feature type="sequence variant" id="VAR_042116" description="In dbSNP:rs35719334." evidence="10">
    <original>R</original>
    <variation>Q</variation>
    <location>
        <position position="575"/>
    </location>
</feature>
<feature type="sequence variant" id="VAR_042117" description="In dbSNP:rs34178823." evidence="10">
    <original>A</original>
    <variation>T</variation>
    <location>
        <position position="585"/>
    </location>
</feature>
<feature type="sequence variant" id="VAR_042118" description="In dbSNP:rs34372369." evidence="10">
    <original>P</original>
    <variation>L</variation>
    <location>
        <position position="697"/>
    </location>
</feature>
<feature type="sequence variant" id="VAR_042119" description="In a breast pleomorphic lobular carcinoma sample; somatic mutation." evidence="10">
    <original>E</original>
    <variation>K</variation>
    <location>
        <position position="703"/>
    </location>
</feature>
<feature type="sequence variant" id="VAR_042120" description="In dbSNP:rs56244405." evidence="10">
    <original>S</original>
    <variation>R</variation>
    <location>
        <position position="807"/>
    </location>
</feature>
<feature type="sequence variant" id="VAR_028267" description="In dbSNP:rs6967117." evidence="7 8 9 10 15 16 17 20">
    <original>M</original>
    <variation>V</variation>
    <location>
        <position position="900"/>
    </location>
</feature>
<feature type="sequence conflict" description="In Ref. 2; AAD43440 and 8; CAA81796." evidence="19" ref="2 8">
    <original>G</original>
    <variation>A</variation>
    <location>
        <position position="398"/>
    </location>
</feature>
<feature type="strand" evidence="22">
    <location>
        <begin position="538"/>
        <end position="540"/>
    </location>
</feature>
<feature type="helix" evidence="22">
    <location>
        <begin position="545"/>
        <end position="570"/>
    </location>
</feature>
<feature type="helix" evidence="23">
    <location>
        <begin position="918"/>
        <end position="924"/>
    </location>
</feature>
<feature type="helix" evidence="23">
    <location>
        <begin position="928"/>
        <end position="930"/>
    </location>
</feature>
<feature type="helix" evidence="23">
    <location>
        <begin position="931"/>
        <end position="936"/>
    </location>
</feature>
<feature type="helix" evidence="23">
    <location>
        <begin position="942"/>
        <end position="945"/>
    </location>
</feature>
<feature type="helix" evidence="23">
    <location>
        <begin position="950"/>
        <end position="955"/>
    </location>
</feature>
<feature type="helix" evidence="23">
    <location>
        <begin position="961"/>
        <end position="973"/>
    </location>
</feature>
<dbReference type="EC" id="2.7.10.1"/>
<dbReference type="EMBL" id="M18391">
    <property type="protein sequence ID" value="AAA36747.1"/>
    <property type="status" value="ALT_FRAME"/>
    <property type="molecule type" value="mRNA"/>
</dbReference>
<dbReference type="EMBL" id="AF101171">
    <property type="protein sequence ID" value="AAD43440.1"/>
    <property type="molecule type" value="Genomic_DNA"/>
</dbReference>
<dbReference type="EMBL" id="AF101165">
    <property type="protein sequence ID" value="AAD43440.1"/>
    <property type="status" value="JOINED"/>
    <property type="molecule type" value="Genomic_DNA"/>
</dbReference>
<dbReference type="EMBL" id="AF101166">
    <property type="protein sequence ID" value="AAD43440.1"/>
    <property type="status" value="JOINED"/>
    <property type="molecule type" value="Genomic_DNA"/>
</dbReference>
<dbReference type="EMBL" id="AF101167">
    <property type="protein sequence ID" value="AAD43440.1"/>
    <property type="status" value="JOINED"/>
    <property type="molecule type" value="Genomic_DNA"/>
</dbReference>
<dbReference type="EMBL" id="AF101168">
    <property type="protein sequence ID" value="AAD43440.1"/>
    <property type="status" value="JOINED"/>
    <property type="molecule type" value="Genomic_DNA"/>
</dbReference>
<dbReference type="EMBL" id="AF101169">
    <property type="protein sequence ID" value="AAD43440.1"/>
    <property type="status" value="JOINED"/>
    <property type="molecule type" value="Genomic_DNA"/>
</dbReference>
<dbReference type="EMBL" id="AF101170">
    <property type="protein sequence ID" value="AAD43440.1"/>
    <property type="status" value="JOINED"/>
    <property type="molecule type" value="Genomic_DNA"/>
</dbReference>
<dbReference type="EMBL" id="EU826604">
    <property type="protein sequence ID" value="ACF47640.1"/>
    <property type="molecule type" value="mRNA"/>
</dbReference>
<dbReference type="EMBL" id="EU826605">
    <property type="protein sequence ID" value="ACF47641.1"/>
    <property type="molecule type" value="mRNA"/>
</dbReference>
<dbReference type="EMBL" id="AC092214">
    <property type="protein sequence ID" value="AAS07458.1"/>
    <property type="molecule type" value="Genomic_DNA"/>
</dbReference>
<dbReference type="EMBL" id="CH236959">
    <property type="protein sequence ID" value="EAL23789.1"/>
    <property type="molecule type" value="Genomic_DNA"/>
</dbReference>
<dbReference type="EMBL" id="CH471198">
    <property type="protein sequence ID" value="EAW51846.1"/>
    <property type="molecule type" value="Genomic_DNA"/>
</dbReference>
<dbReference type="EMBL" id="CH471198">
    <property type="protein sequence ID" value="EAW51847.1"/>
    <property type="molecule type" value="Genomic_DNA"/>
</dbReference>
<dbReference type="EMBL" id="BC130291">
    <property type="protein sequence ID" value="AAI30292.1"/>
    <property type="molecule type" value="mRNA"/>
</dbReference>
<dbReference type="EMBL" id="Z27409">
    <property type="protein sequence ID" value="CAA81796.1"/>
    <property type="molecule type" value="mRNA"/>
</dbReference>
<dbReference type="CCDS" id="CCDS5884.1">
    <molecule id="P21709-1"/>
</dbReference>
<dbReference type="PIR" id="A34076">
    <property type="entry name" value="A34076"/>
</dbReference>
<dbReference type="RefSeq" id="NP_005223.4">
    <molecule id="P21709-1"/>
    <property type="nucleotide sequence ID" value="NM_005232.4"/>
</dbReference>
<dbReference type="PDB" id="2K1K">
    <property type="method" value="NMR"/>
    <property type="chains" value="A/B=536-573"/>
</dbReference>
<dbReference type="PDB" id="2K1L">
    <property type="method" value="NMR"/>
    <property type="chains" value="A/B=536-573"/>
</dbReference>
<dbReference type="PDB" id="3HIL">
    <property type="method" value="X-ray"/>
    <property type="resolution" value="2.00 A"/>
    <property type="chains" value="A/B=911-974"/>
</dbReference>
<dbReference type="PDB" id="3KKA">
    <property type="method" value="X-ray"/>
    <property type="resolution" value="2.40 A"/>
    <property type="chains" value="A/B=911-974"/>
</dbReference>
<dbReference type="PDBsum" id="2K1K"/>
<dbReference type="PDBsum" id="2K1L"/>
<dbReference type="PDBsum" id="3HIL"/>
<dbReference type="PDBsum" id="3KKA"/>
<dbReference type="BMRB" id="P21709"/>
<dbReference type="SMR" id="P21709"/>
<dbReference type="BioGRID" id="108355">
    <property type="interactions" value="251"/>
</dbReference>
<dbReference type="CORUM" id="P21709"/>
<dbReference type="DIP" id="DIP-34886N"/>
<dbReference type="FunCoup" id="P21709">
    <property type="interactions" value="145"/>
</dbReference>
<dbReference type="IntAct" id="P21709">
    <property type="interactions" value="265"/>
</dbReference>
<dbReference type="MINT" id="P21709"/>
<dbReference type="STRING" id="9606.ENSP00000275815"/>
<dbReference type="BindingDB" id="P21709"/>
<dbReference type="ChEMBL" id="CHEMBL5810"/>
<dbReference type="DrugBank" id="DB12010">
    <property type="generic name" value="Fostamatinib"/>
</dbReference>
<dbReference type="DrugCentral" id="P21709"/>
<dbReference type="GuidetoPHARMACOLOGY" id="1821"/>
<dbReference type="GlyCosmos" id="P21709">
    <property type="glycosylation" value="1 site, No reported glycans"/>
</dbReference>
<dbReference type="GlyGen" id="P21709">
    <property type="glycosylation" value="1 site"/>
</dbReference>
<dbReference type="iPTMnet" id="P21709"/>
<dbReference type="PhosphoSitePlus" id="P21709"/>
<dbReference type="SwissPalm" id="P21709"/>
<dbReference type="BioMuta" id="EPHA1"/>
<dbReference type="DMDM" id="317373566"/>
<dbReference type="CPTAC" id="CPTAC-2782"/>
<dbReference type="jPOST" id="P21709"/>
<dbReference type="MassIVE" id="P21709"/>
<dbReference type="PaxDb" id="9606-ENSP00000275815"/>
<dbReference type="PeptideAtlas" id="P21709"/>
<dbReference type="ProteomicsDB" id="53891">
    <molecule id="P21709-1"/>
</dbReference>
<dbReference type="ABCD" id="P21709">
    <property type="antibodies" value="2 sequenced antibodies"/>
</dbReference>
<dbReference type="Antibodypedia" id="32658">
    <property type="antibodies" value="622 antibodies from 39 providers"/>
</dbReference>
<dbReference type="DNASU" id="2041"/>
<dbReference type="Ensembl" id="ENST00000275815.4">
    <molecule id="P21709-1"/>
    <property type="protein sequence ID" value="ENSP00000275815.3"/>
    <property type="gene ID" value="ENSG00000146904.9"/>
</dbReference>
<dbReference type="Ensembl" id="ENST00000645847.2">
    <molecule id="P21709-1"/>
    <property type="protein sequence ID" value="ENSP00000494931.1"/>
    <property type="gene ID" value="ENSG00000284816.2"/>
</dbReference>
<dbReference type="GeneID" id="2041"/>
<dbReference type="KEGG" id="hsa:2041"/>
<dbReference type="MANE-Select" id="ENST00000275815.4">
    <property type="protein sequence ID" value="ENSP00000275815.3"/>
    <property type="RefSeq nucleotide sequence ID" value="NM_005232.5"/>
    <property type="RefSeq protein sequence ID" value="NP_005223.4"/>
</dbReference>
<dbReference type="UCSC" id="uc003wcz.3">
    <molecule id="P21709-1"/>
    <property type="organism name" value="human"/>
</dbReference>
<dbReference type="AGR" id="HGNC:3385"/>
<dbReference type="CTD" id="2041"/>
<dbReference type="DisGeNET" id="2041"/>
<dbReference type="GeneCards" id="EPHA1"/>
<dbReference type="HGNC" id="HGNC:3385">
    <property type="gene designation" value="EPHA1"/>
</dbReference>
<dbReference type="HPA" id="ENSG00000146904">
    <property type="expression patterns" value="Group enriched (esophagus, parathyroid gland)"/>
</dbReference>
<dbReference type="MIM" id="179610">
    <property type="type" value="gene"/>
</dbReference>
<dbReference type="neXtProt" id="NX_P21709"/>
<dbReference type="NIAGADS" id="ENSG00000146904"/>
<dbReference type="OpenTargets" id="ENSG00000146904"/>
<dbReference type="PharmGKB" id="PA27817"/>
<dbReference type="VEuPathDB" id="HostDB:ENSG00000146904"/>
<dbReference type="eggNOG" id="KOG0196">
    <property type="taxonomic scope" value="Eukaryota"/>
</dbReference>
<dbReference type="GeneTree" id="ENSGT00940000160920"/>
<dbReference type="HOGENOM" id="CLU_000288_141_0_1"/>
<dbReference type="InParanoid" id="P21709"/>
<dbReference type="OMA" id="SCWSHDR"/>
<dbReference type="OrthoDB" id="4062651at2759"/>
<dbReference type="PAN-GO" id="P21709">
    <property type="GO annotations" value="8 GO annotations based on evolutionary models"/>
</dbReference>
<dbReference type="PhylomeDB" id="P21709"/>
<dbReference type="TreeFam" id="TF315363"/>
<dbReference type="BRENDA" id="2.7.10.1">
    <property type="organism ID" value="2681"/>
</dbReference>
<dbReference type="PathwayCommons" id="P21709"/>
<dbReference type="Reactome" id="R-HSA-2682334">
    <property type="pathway name" value="EPH-Ephrin signaling"/>
</dbReference>
<dbReference type="Reactome" id="R-HSA-2892247">
    <property type="pathway name" value="POU5F1 (OCT4), SOX2, NANOG activate genes related to proliferation"/>
</dbReference>
<dbReference type="Reactome" id="R-HSA-3928663">
    <property type="pathway name" value="EPHA-mediated growth cone collapse"/>
</dbReference>
<dbReference type="Reactome" id="R-HSA-3928665">
    <property type="pathway name" value="EPH-ephrin mediated repulsion of cells"/>
</dbReference>
<dbReference type="SignaLink" id="P21709"/>
<dbReference type="SIGNOR" id="P21709"/>
<dbReference type="BioGRID-ORCS" id="2041">
    <property type="hits" value="8 hits in 1187 CRISPR screens"/>
</dbReference>
<dbReference type="ChiTaRS" id="EPHA1">
    <property type="organism name" value="human"/>
</dbReference>
<dbReference type="EvolutionaryTrace" id="P21709"/>
<dbReference type="GeneWiki" id="EPH_receptor_A1"/>
<dbReference type="GenomeRNAi" id="2041"/>
<dbReference type="Pharos" id="P21709">
    <property type="development level" value="Tchem"/>
</dbReference>
<dbReference type="PRO" id="PR:P21709"/>
<dbReference type="Proteomes" id="UP000005640">
    <property type="component" value="Chromosome 7"/>
</dbReference>
<dbReference type="RNAct" id="P21709">
    <property type="molecule type" value="protein"/>
</dbReference>
<dbReference type="Bgee" id="ENSG00000146904">
    <property type="expression patterns" value="Expressed in lower esophagus mucosa and 93 other cell types or tissues"/>
</dbReference>
<dbReference type="GO" id="GO:0005886">
    <property type="term" value="C:plasma membrane"/>
    <property type="evidence" value="ECO:0000314"/>
    <property type="project" value="UniProtKB"/>
</dbReference>
<dbReference type="GO" id="GO:0043235">
    <property type="term" value="C:receptor complex"/>
    <property type="evidence" value="ECO:0000318"/>
    <property type="project" value="GO_Central"/>
</dbReference>
<dbReference type="GO" id="GO:0005524">
    <property type="term" value="F:ATP binding"/>
    <property type="evidence" value="ECO:0007669"/>
    <property type="project" value="UniProtKB-KW"/>
</dbReference>
<dbReference type="GO" id="GO:0001968">
    <property type="term" value="F:fibronectin binding"/>
    <property type="evidence" value="ECO:0000314"/>
    <property type="project" value="ARUK-UCL"/>
</dbReference>
<dbReference type="GO" id="GO:0004672">
    <property type="term" value="F:protein kinase activity"/>
    <property type="evidence" value="ECO:0000314"/>
    <property type="project" value="UniProtKB"/>
</dbReference>
<dbReference type="GO" id="GO:0019901">
    <property type="term" value="F:protein kinase binding"/>
    <property type="evidence" value="ECO:0000353"/>
    <property type="project" value="UniProtKB"/>
</dbReference>
<dbReference type="GO" id="GO:0004714">
    <property type="term" value="F:transmembrane receptor protein tyrosine kinase activity"/>
    <property type="evidence" value="ECO:0000318"/>
    <property type="project" value="GO_Central"/>
</dbReference>
<dbReference type="GO" id="GO:0005005">
    <property type="term" value="F:transmembrane-ephrin receptor activity"/>
    <property type="evidence" value="ECO:0000314"/>
    <property type="project" value="UniProtKB"/>
</dbReference>
<dbReference type="GO" id="GO:0001525">
    <property type="term" value="P:angiogenesis"/>
    <property type="evidence" value="ECO:0007669"/>
    <property type="project" value="UniProtKB-KW"/>
</dbReference>
<dbReference type="GO" id="GO:0007169">
    <property type="term" value="P:cell surface receptor protein tyrosine kinase signaling pathway"/>
    <property type="evidence" value="ECO:0000314"/>
    <property type="project" value="UniProtKB"/>
</dbReference>
<dbReference type="GO" id="GO:0030336">
    <property type="term" value="P:negative regulation of cell migration"/>
    <property type="evidence" value="ECO:0000314"/>
    <property type="project" value="UniProtKB"/>
</dbReference>
<dbReference type="GO" id="GO:0045766">
    <property type="term" value="P:positive regulation of angiogenesis"/>
    <property type="evidence" value="ECO:0000315"/>
    <property type="project" value="UniProtKB"/>
</dbReference>
<dbReference type="GO" id="GO:0030335">
    <property type="term" value="P:positive regulation of cell migration"/>
    <property type="evidence" value="ECO:0000315"/>
    <property type="project" value="UniProtKB"/>
</dbReference>
<dbReference type="GO" id="GO:0001954">
    <property type="term" value="P:positive regulation of cell-matrix adhesion"/>
    <property type="evidence" value="ECO:0000314"/>
    <property type="project" value="UniProtKB"/>
</dbReference>
<dbReference type="GO" id="GO:0051496">
    <property type="term" value="P:positive regulation of stress fiber assembly"/>
    <property type="evidence" value="ECO:0000250"/>
    <property type="project" value="UniProtKB"/>
</dbReference>
<dbReference type="GO" id="GO:0034446">
    <property type="term" value="P:substrate adhesion-dependent cell spreading"/>
    <property type="evidence" value="ECO:0000314"/>
    <property type="project" value="UniProtKB"/>
</dbReference>
<dbReference type="CDD" id="cd10479">
    <property type="entry name" value="EphR_LBD_A1"/>
    <property type="match status" value="1"/>
</dbReference>
<dbReference type="CDD" id="cd00063">
    <property type="entry name" value="FN3"/>
    <property type="match status" value="2"/>
</dbReference>
<dbReference type="CDD" id="cd09542">
    <property type="entry name" value="SAM_EPH-A1"/>
    <property type="match status" value="1"/>
</dbReference>
<dbReference type="CDD" id="cd12841">
    <property type="entry name" value="TM_EphA1"/>
    <property type="match status" value="1"/>
</dbReference>
<dbReference type="FunFam" id="1.10.150.50:FF:000029">
    <property type="entry name" value="Ephrin type-A receptor 1"/>
    <property type="match status" value="1"/>
</dbReference>
<dbReference type="FunFam" id="2.60.40.10:FF:000626">
    <property type="entry name" value="Ephrin type-A receptor 1"/>
    <property type="match status" value="1"/>
</dbReference>
<dbReference type="FunFam" id="3.30.200.20:FF:000317">
    <property type="entry name" value="Ephrin type-A receptor 1"/>
    <property type="match status" value="1"/>
</dbReference>
<dbReference type="FunFam" id="2.60.120.260:FF:000023">
    <property type="entry name" value="Ephrin type-A receptor 2"/>
    <property type="match status" value="1"/>
</dbReference>
<dbReference type="FunFam" id="2.10.50.10:FF:000001">
    <property type="entry name" value="Ephrin type-A receptor 5"/>
    <property type="match status" value="1"/>
</dbReference>
<dbReference type="FunFam" id="2.60.40.1770:FF:000001">
    <property type="entry name" value="Ephrin type-A receptor 5"/>
    <property type="match status" value="1"/>
</dbReference>
<dbReference type="FunFam" id="2.60.40.10:FF:000059">
    <property type="entry name" value="Ephrin type-A receptor 6"/>
    <property type="match status" value="1"/>
</dbReference>
<dbReference type="FunFam" id="1.10.510.10:FF:000268">
    <property type="entry name" value="Receptor protein-tyrosine kinase"/>
    <property type="match status" value="1"/>
</dbReference>
<dbReference type="Gene3D" id="2.60.40.1770">
    <property type="entry name" value="ephrin a2 ectodomain"/>
    <property type="match status" value="1"/>
</dbReference>
<dbReference type="Gene3D" id="2.60.120.260">
    <property type="entry name" value="Galactose-binding domain-like"/>
    <property type="match status" value="1"/>
</dbReference>
<dbReference type="Gene3D" id="2.60.40.10">
    <property type="entry name" value="Immunoglobulins"/>
    <property type="match status" value="2"/>
</dbReference>
<dbReference type="Gene3D" id="3.30.200.20">
    <property type="entry name" value="Phosphorylase Kinase, domain 1"/>
    <property type="match status" value="1"/>
</dbReference>
<dbReference type="Gene3D" id="1.10.150.50">
    <property type="entry name" value="Transcription Factor, Ets-1"/>
    <property type="match status" value="1"/>
</dbReference>
<dbReference type="Gene3D" id="1.10.510.10">
    <property type="entry name" value="Transferase(Phosphotransferase) domain 1"/>
    <property type="match status" value="1"/>
</dbReference>
<dbReference type="Gene3D" id="2.10.50.10">
    <property type="entry name" value="Tumor Necrosis Factor Receptor, subunit A, domain 2"/>
    <property type="match status" value="1"/>
</dbReference>
<dbReference type="InterPro" id="IPR027936">
    <property type="entry name" value="Eph_TM"/>
</dbReference>
<dbReference type="InterPro" id="IPR034251">
    <property type="entry name" value="EphA1_rcpt_lig-bd"/>
</dbReference>
<dbReference type="InterPro" id="IPR001090">
    <property type="entry name" value="Ephrin_rcpt_lig-bd_dom"/>
</dbReference>
<dbReference type="InterPro" id="IPR050449">
    <property type="entry name" value="Ephrin_rcpt_TKs"/>
</dbReference>
<dbReference type="InterPro" id="IPR003961">
    <property type="entry name" value="FN3_dom"/>
</dbReference>
<dbReference type="InterPro" id="IPR036116">
    <property type="entry name" value="FN3_sf"/>
</dbReference>
<dbReference type="InterPro" id="IPR008979">
    <property type="entry name" value="Galactose-bd-like_sf"/>
</dbReference>
<dbReference type="InterPro" id="IPR009030">
    <property type="entry name" value="Growth_fac_rcpt_cys_sf"/>
</dbReference>
<dbReference type="InterPro" id="IPR013783">
    <property type="entry name" value="Ig-like_fold"/>
</dbReference>
<dbReference type="InterPro" id="IPR011009">
    <property type="entry name" value="Kinase-like_dom_sf"/>
</dbReference>
<dbReference type="InterPro" id="IPR000719">
    <property type="entry name" value="Prot_kinase_dom"/>
</dbReference>
<dbReference type="InterPro" id="IPR017441">
    <property type="entry name" value="Protein_kinase_ATP_BS"/>
</dbReference>
<dbReference type="InterPro" id="IPR001660">
    <property type="entry name" value="SAM"/>
</dbReference>
<dbReference type="InterPro" id="IPR013761">
    <property type="entry name" value="SAM/pointed_sf"/>
</dbReference>
<dbReference type="InterPro" id="IPR001245">
    <property type="entry name" value="Ser-Thr/Tyr_kinase_cat_dom"/>
</dbReference>
<dbReference type="InterPro" id="IPR011641">
    <property type="entry name" value="Tyr-kin_ephrin_A/B_rcpt-like"/>
</dbReference>
<dbReference type="InterPro" id="IPR008266">
    <property type="entry name" value="Tyr_kinase_AS"/>
</dbReference>
<dbReference type="InterPro" id="IPR020635">
    <property type="entry name" value="Tyr_kinase_cat_dom"/>
</dbReference>
<dbReference type="InterPro" id="IPR016257">
    <property type="entry name" value="Tyr_kinase_ephrin_rcpt"/>
</dbReference>
<dbReference type="InterPro" id="IPR001426">
    <property type="entry name" value="Tyr_kinase_rcpt_V_CS"/>
</dbReference>
<dbReference type="PANTHER" id="PTHR46877">
    <property type="entry name" value="EPH RECEPTOR A5"/>
    <property type="match status" value="1"/>
</dbReference>
<dbReference type="PANTHER" id="PTHR46877:SF20">
    <property type="entry name" value="RECEPTOR PROTEIN-TYROSINE KINASE"/>
    <property type="match status" value="1"/>
</dbReference>
<dbReference type="Pfam" id="PF14575">
    <property type="entry name" value="EphA2_TM"/>
    <property type="match status" value="1"/>
</dbReference>
<dbReference type="Pfam" id="PF01404">
    <property type="entry name" value="Ephrin_lbd"/>
    <property type="match status" value="1"/>
</dbReference>
<dbReference type="Pfam" id="PF07699">
    <property type="entry name" value="Ephrin_rec_like"/>
    <property type="match status" value="1"/>
</dbReference>
<dbReference type="Pfam" id="PF00041">
    <property type="entry name" value="fn3"/>
    <property type="match status" value="2"/>
</dbReference>
<dbReference type="Pfam" id="PF07714">
    <property type="entry name" value="PK_Tyr_Ser-Thr"/>
    <property type="match status" value="1"/>
</dbReference>
<dbReference type="Pfam" id="PF00536">
    <property type="entry name" value="SAM_1"/>
    <property type="match status" value="1"/>
</dbReference>
<dbReference type="PIRSF" id="PIRSF000666">
    <property type="entry name" value="TyrPK_ephrin_receptor"/>
    <property type="match status" value="1"/>
</dbReference>
<dbReference type="PRINTS" id="PR00109">
    <property type="entry name" value="TYRKINASE"/>
</dbReference>
<dbReference type="SMART" id="SM00615">
    <property type="entry name" value="EPH_lbd"/>
    <property type="match status" value="1"/>
</dbReference>
<dbReference type="SMART" id="SM01411">
    <property type="entry name" value="Ephrin_rec_like"/>
    <property type="match status" value="1"/>
</dbReference>
<dbReference type="SMART" id="SM00060">
    <property type="entry name" value="FN3"/>
    <property type="match status" value="2"/>
</dbReference>
<dbReference type="SMART" id="SM00454">
    <property type="entry name" value="SAM"/>
    <property type="match status" value="1"/>
</dbReference>
<dbReference type="SMART" id="SM00219">
    <property type="entry name" value="TyrKc"/>
    <property type="match status" value="1"/>
</dbReference>
<dbReference type="SUPFAM" id="SSF49265">
    <property type="entry name" value="Fibronectin type III"/>
    <property type="match status" value="1"/>
</dbReference>
<dbReference type="SUPFAM" id="SSF49785">
    <property type="entry name" value="Galactose-binding domain-like"/>
    <property type="match status" value="1"/>
</dbReference>
<dbReference type="SUPFAM" id="SSF57184">
    <property type="entry name" value="Growth factor receptor domain"/>
    <property type="match status" value="1"/>
</dbReference>
<dbReference type="SUPFAM" id="SSF56112">
    <property type="entry name" value="Protein kinase-like (PK-like)"/>
    <property type="match status" value="1"/>
</dbReference>
<dbReference type="SUPFAM" id="SSF47769">
    <property type="entry name" value="SAM/Pointed domain"/>
    <property type="match status" value="1"/>
</dbReference>
<dbReference type="PROSITE" id="PS01186">
    <property type="entry name" value="EGF_2"/>
    <property type="match status" value="1"/>
</dbReference>
<dbReference type="PROSITE" id="PS51550">
    <property type="entry name" value="EPH_LBD"/>
    <property type="match status" value="1"/>
</dbReference>
<dbReference type="PROSITE" id="PS50853">
    <property type="entry name" value="FN3"/>
    <property type="match status" value="2"/>
</dbReference>
<dbReference type="PROSITE" id="PS00107">
    <property type="entry name" value="PROTEIN_KINASE_ATP"/>
    <property type="match status" value="1"/>
</dbReference>
<dbReference type="PROSITE" id="PS50011">
    <property type="entry name" value="PROTEIN_KINASE_DOM"/>
    <property type="match status" value="1"/>
</dbReference>
<dbReference type="PROSITE" id="PS00109">
    <property type="entry name" value="PROTEIN_KINASE_TYR"/>
    <property type="match status" value="1"/>
</dbReference>
<dbReference type="PROSITE" id="PS00790">
    <property type="entry name" value="RECEPTOR_TYR_KIN_V_1"/>
    <property type="match status" value="1"/>
</dbReference>
<dbReference type="PROSITE" id="PS00791">
    <property type="entry name" value="RECEPTOR_TYR_KIN_V_2"/>
    <property type="match status" value="1"/>
</dbReference>
<dbReference type="PROSITE" id="PS50105">
    <property type="entry name" value="SAM_DOMAIN"/>
    <property type="match status" value="1"/>
</dbReference>
<organism>
    <name type="scientific">Homo sapiens</name>
    <name type="common">Human</name>
    <dbReference type="NCBI Taxonomy" id="9606"/>
    <lineage>
        <taxon>Eukaryota</taxon>
        <taxon>Metazoa</taxon>
        <taxon>Chordata</taxon>
        <taxon>Craniata</taxon>
        <taxon>Vertebrata</taxon>
        <taxon>Euteleostomi</taxon>
        <taxon>Mammalia</taxon>
        <taxon>Eutheria</taxon>
        <taxon>Euarchontoglires</taxon>
        <taxon>Primates</taxon>
        <taxon>Haplorrhini</taxon>
        <taxon>Catarrhini</taxon>
        <taxon>Hominidae</taxon>
        <taxon>Homo</taxon>
    </lineage>
</organism>
<sequence>MERRWPLGLGLVLLLCAPLPPGARAKEVTLMDTSKAQGELGWLLDPPKDGWSEQQQILNGTPLYMYQDCPMQGRRDTDHWLRSNWIYRGEEASRVHVELQFTVRDCKSFPGGAGPLGCKETFNLLYMESDQDVGIQLRRPLFQKVTTVAADQSFTIRDLVSGSVKLNVERCSLGRLTRRGLYLAFHNPGACVALVSVRVFYQRCPETLNGLAQFPDTLPGPAGLVEVAGTCLPHARASPRPSGAPRMHCSPDGEWLVPVGRCHCEPGYEEGGSGEACVACPSGSYRMDMDTPHCLTCPQQSTAESEGATICTCESGHYRAPGEGPQVACTGPPSAPRNLSFSASGTQLSLRWEPPADTGGRQDVRYSVRCSQCQGTAQDGGPCQPCGVGVHFSPGARGLTTPAVHVNGLEPYANYTFNVEAQNGVSGLGSSGHASTSVSISMGHAESLSGLSLRLVKKEPRQLELTWAGSRPRSPGANLTYELHVLNQDEERYQMVLEPRVLLTELQPDTTYIVRVRMLTPLGPGPFSPDHEFRTSPPVSRGLTGGEIVAVIFGLLLGAALLLGILVFRSRRAQRQRQQRQRDRATDVDREDKLWLKPYVDLQAYEDPAQGALDFTRELDPAWLMVDTVIGEGEFGEVYRGTLRLPSQDCKTVAIKTLKDTSPGGQWWNFLREATIMGQFSHPHILHLEGVVTKRKPIMIITEFMENGALDAFLREREDQLVPGQLVAMLQGIASGMNYLSNHNYVHRDLAARNILVNQNLCCKVSDFGLTRLLDDFDGTYETQGGKIPIRWTAPEAIAHRIFTTASDVWSFGIVMWEVLSFGDKPYGEMSNQEVMKSIEDGYRLPPPVDCPAPLYELMKNCWAYDRARRPHFQKLQAHLEQLLANPHSLRTIANFDPRMTLRLPSLSGSDGIPYRTVSEWLESIRMKRYILHFHSAGLDTMECVLELTAEDLTQMGITLPGHQKRILCSIQGFKD</sequence>
<accession>P21709</accession>
<accession>A1L3V3</accession>
<accession>B5A966</accession>
<accession>B5A967</accession>
<accession>Q15405</accession>
<comment type="function">
    <text evidence="11 12 13">Receptor tyrosine kinase which binds promiscuously membrane-bound ephrin-A family ligands residing on adjacent cells, leading to contact-dependent bidirectional signaling into neighboring cells. The signaling pathway downstream of the receptor is referred to as forward signaling while the signaling pathway downstream of the ephrin ligand is referred to as reverse signaling. Binds with a low affinity EFNA3 and EFNA4 and with a high affinity to EFNA1 which most probably constitutes its cognate/functional ligand. Upon activation by EFNA1 induces cell attachment to the extracellular matrix inhibiting cell spreading and motility through regulation of ILK and downstream RHOA and RAC. Also plays a role in angiogenesis and regulates cell proliferation. May play a role in apoptosis.</text>
</comment>
<comment type="catalytic activity">
    <reaction evidence="6">
        <text>L-tyrosyl-[protein] + ATP = O-phospho-L-tyrosyl-[protein] + ADP + H(+)</text>
        <dbReference type="Rhea" id="RHEA:10596"/>
        <dbReference type="Rhea" id="RHEA-COMP:10136"/>
        <dbReference type="Rhea" id="RHEA-COMP:20101"/>
        <dbReference type="ChEBI" id="CHEBI:15378"/>
        <dbReference type="ChEBI" id="CHEBI:30616"/>
        <dbReference type="ChEBI" id="CHEBI:46858"/>
        <dbReference type="ChEBI" id="CHEBI:61978"/>
        <dbReference type="ChEBI" id="CHEBI:456216"/>
        <dbReference type="EC" id="2.7.10.1"/>
    </reaction>
</comment>
<comment type="subunit">
    <text evidence="11 12">Homodimer. Forms a signaling complex with LCK; PTK2B/PYK2 and PI3-kinase upon activation by EFNA1; regulates T-lymphocytes migration. Interacts (via SAM domain) with ILK (via ANK repeats); stimulated by EFNA1 but independent of the kinase activity of EPHA1. Interacts (kinase activity-dependent) with PTK2/FAK1.</text>
</comment>
<comment type="subcellular location">
    <subcellularLocation>
        <location evidence="12">Cell membrane</location>
        <topology evidence="12">Single-pass type I membrane protein</topology>
    </subcellularLocation>
</comment>
<comment type="alternative products">
    <event type="alternative splicing"/>
    <isoform>
        <id>P21709-1</id>
        <name>1</name>
        <sequence type="displayed"/>
    </isoform>
    <isoform>
        <id>P21709-2</id>
        <name>2</name>
        <sequence type="described" ref="VSP_056010 VSP_056013"/>
    </isoform>
    <isoform>
        <id>P21709-3</id>
        <name>3</name>
        <sequence type="described" ref="VSP_056011 VSP_056012"/>
    </isoform>
</comment>
<comment type="tissue specificity">
    <text>Overexpressed in several carcinomas.</text>
</comment>
<comment type="PTM">
    <text>Phosphorylated. Autophosphorylation is stimulated by its ligand EFNA1.</text>
</comment>
<comment type="PTM">
    <text evidence="14">Ubiquitinated.</text>
</comment>
<comment type="similarity">
    <text evidence="2">Belongs to the protein kinase superfamily. Tyr protein kinase family. Ephrin receptor subfamily.</text>
</comment>
<comment type="sequence caution" evidence="19">
    <conflict type="frameshift">
        <sequence resource="EMBL-CDS" id="AAA36747"/>
    </conflict>
</comment>
<comment type="online information" name="Atlas of Genetics and Cytogenetics in Oncology and Haematology">
    <link uri="https://atlasgeneticsoncology.org/gene/40461/EPHA1"/>
</comment>
<proteinExistence type="evidence at protein level"/>